<name>MRAY_CORK4</name>
<feature type="chain" id="PRO_1000202061" description="Phospho-N-acetylmuramoyl-pentapeptide-transferase">
    <location>
        <begin position="1"/>
        <end position="365"/>
    </location>
</feature>
<feature type="transmembrane region" description="Helical" evidence="1">
    <location>
        <begin position="3"/>
        <end position="23"/>
    </location>
</feature>
<feature type="transmembrane region" description="Helical" evidence="1">
    <location>
        <begin position="54"/>
        <end position="74"/>
    </location>
</feature>
<feature type="transmembrane region" description="Helical" evidence="1">
    <location>
        <begin position="81"/>
        <end position="101"/>
    </location>
</feature>
<feature type="transmembrane region" description="Helical" evidence="1">
    <location>
        <begin position="119"/>
        <end position="139"/>
    </location>
</feature>
<feature type="transmembrane region" description="Helical" evidence="1">
    <location>
        <begin position="162"/>
        <end position="182"/>
    </location>
</feature>
<feature type="transmembrane region" description="Helical" evidence="1">
    <location>
        <begin position="198"/>
        <end position="218"/>
    </location>
</feature>
<feature type="transmembrane region" description="Helical" evidence="1">
    <location>
        <begin position="239"/>
        <end position="259"/>
    </location>
</feature>
<feature type="transmembrane region" description="Helical" evidence="1">
    <location>
        <begin position="263"/>
        <end position="283"/>
    </location>
</feature>
<feature type="transmembrane region" description="Helical" evidence="1">
    <location>
        <begin position="289"/>
        <end position="309"/>
    </location>
</feature>
<feature type="transmembrane region" description="Helical" evidence="1">
    <location>
        <begin position="342"/>
        <end position="362"/>
    </location>
</feature>
<sequence length="365" mass="39029">MVHIIIGGAVSFIIAILFTPILIRRFSDEGLGQEIREEGPRSHLRKRGTPTMGGIAIIVAIVGGYFLAHLASVFTPSSYKPTASGLLVLGLTVGMGFLGFLDDYIKLAKARNLGLNKKGKLLGQAVLAIGFGVLCLLFLNEHGLKPASTKLSFVRDIDTFDIAIGGGIIGTLIFLLFIYILVTAWSNAVNLTDGLDGLAAGTTAIVMAAYSIMTFWQFRNSCASNASVACYQVRDPLDLSILAACGLGACLGFLWWNAAPAKIFMGDTGSLALGGLVAGLSVTSRTELLMIVIGALFVAETISVVIQVVSFRSTGKRPFRMAPIHHHFENGGWAETTVVVRFWLLTAMFAVAGVSMFYADWLGWT</sequence>
<gene>
    <name evidence="1" type="primary">mraY</name>
    <name type="ordered locus">ckrop_0744</name>
</gene>
<evidence type="ECO:0000255" key="1">
    <source>
        <dbReference type="HAMAP-Rule" id="MF_00038"/>
    </source>
</evidence>
<keyword id="KW-0131">Cell cycle</keyword>
<keyword id="KW-0132">Cell division</keyword>
<keyword id="KW-1003">Cell membrane</keyword>
<keyword id="KW-0133">Cell shape</keyword>
<keyword id="KW-0961">Cell wall biogenesis/degradation</keyword>
<keyword id="KW-0460">Magnesium</keyword>
<keyword id="KW-0472">Membrane</keyword>
<keyword id="KW-0479">Metal-binding</keyword>
<keyword id="KW-0573">Peptidoglycan synthesis</keyword>
<keyword id="KW-1185">Reference proteome</keyword>
<keyword id="KW-0808">Transferase</keyword>
<keyword id="KW-0812">Transmembrane</keyword>
<keyword id="KW-1133">Transmembrane helix</keyword>
<reference key="1">
    <citation type="journal article" date="2008" name="J. Biotechnol.">
        <title>Ultrafast pyrosequencing of Corynebacterium kroppenstedtii DSM44385 revealed insights into the physiology of a lipophilic corynebacterium that lacks mycolic acids.</title>
        <authorList>
            <person name="Tauch A."/>
            <person name="Schneider J."/>
            <person name="Szczepanowski R."/>
            <person name="Tilker A."/>
            <person name="Viehoever P."/>
            <person name="Gartemann K.-H."/>
            <person name="Arnold W."/>
            <person name="Blom J."/>
            <person name="Brinkrolf K."/>
            <person name="Brune I."/>
            <person name="Goetker S."/>
            <person name="Weisshaar B."/>
            <person name="Goesmann A."/>
            <person name="Droege M."/>
            <person name="Puehler A."/>
        </authorList>
    </citation>
    <scope>NUCLEOTIDE SEQUENCE [LARGE SCALE GENOMIC DNA]</scope>
    <source>
        <strain>DSM 44385 / JCM 11950 / CIP 105744 / CCUG 35717</strain>
    </source>
</reference>
<protein>
    <recommendedName>
        <fullName evidence="1">Phospho-N-acetylmuramoyl-pentapeptide-transferase</fullName>
        <ecNumber evidence="1">2.7.8.13</ecNumber>
    </recommendedName>
    <alternativeName>
        <fullName evidence="1">UDP-MurNAc-pentapeptide phosphotransferase</fullName>
    </alternativeName>
</protein>
<dbReference type="EC" id="2.7.8.13" evidence="1"/>
<dbReference type="EMBL" id="CP001620">
    <property type="protein sequence ID" value="ACR17502.1"/>
    <property type="molecule type" value="Genomic_DNA"/>
</dbReference>
<dbReference type="RefSeq" id="WP_012731389.1">
    <property type="nucleotide sequence ID" value="NC_012704.1"/>
</dbReference>
<dbReference type="SMR" id="C4LI47"/>
<dbReference type="STRING" id="645127.ckrop_0744"/>
<dbReference type="KEGG" id="ckp:ckrop_0744"/>
<dbReference type="eggNOG" id="COG0472">
    <property type="taxonomic scope" value="Bacteria"/>
</dbReference>
<dbReference type="HOGENOM" id="CLU_023982_0_1_11"/>
<dbReference type="OrthoDB" id="9805475at2"/>
<dbReference type="UniPathway" id="UPA00219"/>
<dbReference type="Proteomes" id="UP000001473">
    <property type="component" value="Chromosome"/>
</dbReference>
<dbReference type="GO" id="GO:0005886">
    <property type="term" value="C:plasma membrane"/>
    <property type="evidence" value="ECO:0007669"/>
    <property type="project" value="UniProtKB-SubCell"/>
</dbReference>
<dbReference type="GO" id="GO:0046872">
    <property type="term" value="F:metal ion binding"/>
    <property type="evidence" value="ECO:0007669"/>
    <property type="project" value="UniProtKB-KW"/>
</dbReference>
<dbReference type="GO" id="GO:0008963">
    <property type="term" value="F:phospho-N-acetylmuramoyl-pentapeptide-transferase activity"/>
    <property type="evidence" value="ECO:0007669"/>
    <property type="project" value="UniProtKB-UniRule"/>
</dbReference>
<dbReference type="GO" id="GO:0051992">
    <property type="term" value="F:UDP-N-acetylmuramoyl-L-alanyl-D-glutamyl-meso-2,6-diaminopimelyl-D-alanyl-D-alanine:undecaprenyl-phosphate transferase activity"/>
    <property type="evidence" value="ECO:0007669"/>
    <property type="project" value="RHEA"/>
</dbReference>
<dbReference type="GO" id="GO:0051301">
    <property type="term" value="P:cell division"/>
    <property type="evidence" value="ECO:0007669"/>
    <property type="project" value="UniProtKB-KW"/>
</dbReference>
<dbReference type="GO" id="GO:0071555">
    <property type="term" value="P:cell wall organization"/>
    <property type="evidence" value="ECO:0007669"/>
    <property type="project" value="UniProtKB-KW"/>
</dbReference>
<dbReference type="GO" id="GO:0009252">
    <property type="term" value="P:peptidoglycan biosynthetic process"/>
    <property type="evidence" value="ECO:0007669"/>
    <property type="project" value="UniProtKB-UniRule"/>
</dbReference>
<dbReference type="GO" id="GO:0008360">
    <property type="term" value="P:regulation of cell shape"/>
    <property type="evidence" value="ECO:0007669"/>
    <property type="project" value="UniProtKB-KW"/>
</dbReference>
<dbReference type="CDD" id="cd06852">
    <property type="entry name" value="GT_MraY"/>
    <property type="match status" value="1"/>
</dbReference>
<dbReference type="HAMAP" id="MF_00038">
    <property type="entry name" value="MraY"/>
    <property type="match status" value="1"/>
</dbReference>
<dbReference type="InterPro" id="IPR000715">
    <property type="entry name" value="Glycosyl_transferase_4"/>
</dbReference>
<dbReference type="InterPro" id="IPR003524">
    <property type="entry name" value="PNAcMuramoyl-5peptid_Trfase"/>
</dbReference>
<dbReference type="InterPro" id="IPR018480">
    <property type="entry name" value="PNAcMuramoyl-5peptid_Trfase_CS"/>
</dbReference>
<dbReference type="NCBIfam" id="TIGR00445">
    <property type="entry name" value="mraY"/>
    <property type="match status" value="1"/>
</dbReference>
<dbReference type="PANTHER" id="PTHR22926">
    <property type="entry name" value="PHOSPHO-N-ACETYLMURAMOYL-PENTAPEPTIDE-TRANSFERASE"/>
    <property type="match status" value="1"/>
</dbReference>
<dbReference type="PANTHER" id="PTHR22926:SF5">
    <property type="entry name" value="PHOSPHO-N-ACETYLMURAMOYL-PENTAPEPTIDE-TRANSFERASE HOMOLOG"/>
    <property type="match status" value="1"/>
</dbReference>
<dbReference type="Pfam" id="PF00953">
    <property type="entry name" value="Glycos_transf_4"/>
    <property type="match status" value="1"/>
</dbReference>
<dbReference type="Pfam" id="PF10555">
    <property type="entry name" value="MraY_sig1"/>
    <property type="match status" value="1"/>
</dbReference>
<dbReference type="PROSITE" id="PS01347">
    <property type="entry name" value="MRAY_1"/>
    <property type="match status" value="1"/>
</dbReference>
<dbReference type="PROSITE" id="PS01348">
    <property type="entry name" value="MRAY_2"/>
    <property type="match status" value="1"/>
</dbReference>
<organism>
    <name type="scientific">Corynebacterium kroppenstedtii (strain DSM 44385 / JCM 11950 / CIP 105744 / CCUG 35717)</name>
    <dbReference type="NCBI Taxonomy" id="645127"/>
    <lineage>
        <taxon>Bacteria</taxon>
        <taxon>Bacillati</taxon>
        <taxon>Actinomycetota</taxon>
        <taxon>Actinomycetes</taxon>
        <taxon>Mycobacteriales</taxon>
        <taxon>Corynebacteriaceae</taxon>
        <taxon>Corynebacterium</taxon>
    </lineage>
</organism>
<accession>C4LI47</accession>
<proteinExistence type="inferred from homology"/>
<comment type="function">
    <text evidence="1">Catalyzes the initial step of the lipid cycle reactions in the biosynthesis of the cell wall peptidoglycan: transfers peptidoglycan precursor phospho-MurNAc-pentapeptide from UDP-MurNAc-pentapeptide onto the lipid carrier undecaprenyl phosphate, yielding undecaprenyl-pyrophosphoryl-MurNAc-pentapeptide, known as lipid I.</text>
</comment>
<comment type="catalytic activity">
    <reaction evidence="1">
        <text>UDP-N-acetyl-alpha-D-muramoyl-L-alanyl-gamma-D-glutamyl-meso-2,6-diaminopimeloyl-D-alanyl-D-alanine + di-trans,octa-cis-undecaprenyl phosphate = di-trans,octa-cis-undecaprenyl diphospho-N-acetyl-alpha-D-muramoyl-L-alanyl-D-glutamyl-meso-2,6-diaminopimeloyl-D-alanyl-D-alanine + UMP</text>
        <dbReference type="Rhea" id="RHEA:28386"/>
        <dbReference type="ChEBI" id="CHEBI:57865"/>
        <dbReference type="ChEBI" id="CHEBI:60392"/>
        <dbReference type="ChEBI" id="CHEBI:61386"/>
        <dbReference type="ChEBI" id="CHEBI:61387"/>
        <dbReference type="EC" id="2.7.8.13"/>
    </reaction>
</comment>
<comment type="cofactor">
    <cofactor evidence="1">
        <name>Mg(2+)</name>
        <dbReference type="ChEBI" id="CHEBI:18420"/>
    </cofactor>
</comment>
<comment type="pathway">
    <text evidence="1">Cell wall biogenesis; peptidoglycan biosynthesis.</text>
</comment>
<comment type="subcellular location">
    <subcellularLocation>
        <location evidence="1">Cell membrane</location>
        <topology evidence="1">Multi-pass membrane protein</topology>
    </subcellularLocation>
</comment>
<comment type="similarity">
    <text evidence="1">Belongs to the glycosyltransferase 4 family. MraY subfamily.</text>
</comment>